<accession>A1KGJ7</accession>
<sequence>MTTAQKVQPRLKERYRSEIRDALRKQFGYGNVMQIPTVTKVVVNMGVGEAARDAKLINGAVNDLALITGQKPEVRRARKSIAQFKLREGMPVGVRVTLRGDRMWEFLDRLTSIALPRIRDFRGLSPKQFDGVGNYTFGLAEQAVFHEVDVDKIDRVRGMDINVVTSAATDDEGRALLRALGFPFKEN</sequence>
<keyword id="KW-0687">Ribonucleoprotein</keyword>
<keyword id="KW-0689">Ribosomal protein</keyword>
<keyword id="KW-0694">RNA-binding</keyword>
<keyword id="KW-0699">rRNA-binding</keyword>
<keyword id="KW-0820">tRNA-binding</keyword>
<protein>
    <recommendedName>
        <fullName evidence="1">Large ribosomal subunit protein uL5</fullName>
    </recommendedName>
    <alternativeName>
        <fullName evidence="2">50S ribosomal protein L5</fullName>
    </alternativeName>
</protein>
<reference key="1">
    <citation type="journal article" date="2007" name="Proc. Natl. Acad. Sci. U.S.A.">
        <title>Genome plasticity of BCG and impact on vaccine efficacy.</title>
        <authorList>
            <person name="Brosch R."/>
            <person name="Gordon S.V."/>
            <person name="Garnier T."/>
            <person name="Eiglmeier K."/>
            <person name="Frigui W."/>
            <person name="Valenti P."/>
            <person name="Dos Santos S."/>
            <person name="Duthoy S."/>
            <person name="Lacroix C."/>
            <person name="Garcia-Pelayo C."/>
            <person name="Inwald J.K."/>
            <person name="Golby P."/>
            <person name="Garcia J.N."/>
            <person name="Hewinson R.G."/>
            <person name="Behr M.A."/>
            <person name="Quail M.A."/>
            <person name="Churcher C."/>
            <person name="Barrell B.G."/>
            <person name="Parkhill J."/>
            <person name="Cole S.T."/>
        </authorList>
    </citation>
    <scope>NUCLEOTIDE SEQUENCE [LARGE SCALE GENOMIC DNA]</scope>
    <source>
        <strain>BCG / Pasteur 1173P2</strain>
    </source>
</reference>
<name>RL5_MYCBP</name>
<comment type="function">
    <text evidence="1">This is one of the proteins that bind and probably mediate the attachment of the 5S RNA into the large ribosomal subunit, where it forms part of the central protuberance. In the 70S ribosome it contacts protein S13 of the 30S subunit (bridge B1b), connecting the 2 subunits; this bridge is implicated in subunit movement. Contacts the P site tRNA; the 5S rRNA and some of its associated proteins might help stabilize positioning of ribosome-bound tRNAs.</text>
</comment>
<comment type="subunit">
    <text evidence="1">Part of the 50S ribosomal subunit; part of the 5S rRNA/L5/L18/L25 subcomplex. Contacts the 5S rRNA and the P site tRNA. Forms a bridge to the 30S subunit in the 70S ribosome.</text>
</comment>
<comment type="similarity">
    <text evidence="1">Belongs to the universal ribosomal protein uL5 family.</text>
</comment>
<evidence type="ECO:0000255" key="1">
    <source>
        <dbReference type="HAMAP-Rule" id="MF_01333"/>
    </source>
</evidence>
<evidence type="ECO:0000305" key="2"/>
<proteinExistence type="inferred from homology"/>
<dbReference type="EMBL" id="AM408590">
    <property type="protein sequence ID" value="CAL70752.1"/>
    <property type="molecule type" value="Genomic_DNA"/>
</dbReference>
<dbReference type="RefSeq" id="WP_003403660.1">
    <property type="nucleotide sequence ID" value="NC_008769.1"/>
</dbReference>
<dbReference type="SMR" id="A1KGJ7"/>
<dbReference type="GeneID" id="45424681"/>
<dbReference type="KEGG" id="mbb:BCG_0766"/>
<dbReference type="HOGENOM" id="CLU_061015_2_1_11"/>
<dbReference type="Proteomes" id="UP000001472">
    <property type="component" value="Chromosome"/>
</dbReference>
<dbReference type="GO" id="GO:1990904">
    <property type="term" value="C:ribonucleoprotein complex"/>
    <property type="evidence" value="ECO:0007669"/>
    <property type="project" value="UniProtKB-KW"/>
</dbReference>
<dbReference type="GO" id="GO:0005840">
    <property type="term" value="C:ribosome"/>
    <property type="evidence" value="ECO:0007669"/>
    <property type="project" value="UniProtKB-KW"/>
</dbReference>
<dbReference type="GO" id="GO:0019843">
    <property type="term" value="F:rRNA binding"/>
    <property type="evidence" value="ECO:0007669"/>
    <property type="project" value="UniProtKB-UniRule"/>
</dbReference>
<dbReference type="GO" id="GO:0003735">
    <property type="term" value="F:structural constituent of ribosome"/>
    <property type="evidence" value="ECO:0007669"/>
    <property type="project" value="InterPro"/>
</dbReference>
<dbReference type="GO" id="GO:0000049">
    <property type="term" value="F:tRNA binding"/>
    <property type="evidence" value="ECO:0007669"/>
    <property type="project" value="UniProtKB-UniRule"/>
</dbReference>
<dbReference type="GO" id="GO:0006412">
    <property type="term" value="P:translation"/>
    <property type="evidence" value="ECO:0007669"/>
    <property type="project" value="UniProtKB-UniRule"/>
</dbReference>
<dbReference type="FunFam" id="3.30.1440.10:FF:000001">
    <property type="entry name" value="50S ribosomal protein L5"/>
    <property type="match status" value="1"/>
</dbReference>
<dbReference type="Gene3D" id="3.30.1440.10">
    <property type="match status" value="1"/>
</dbReference>
<dbReference type="HAMAP" id="MF_01333_B">
    <property type="entry name" value="Ribosomal_uL5_B"/>
    <property type="match status" value="1"/>
</dbReference>
<dbReference type="InterPro" id="IPR002132">
    <property type="entry name" value="Ribosomal_uL5"/>
</dbReference>
<dbReference type="InterPro" id="IPR020930">
    <property type="entry name" value="Ribosomal_uL5_bac-type"/>
</dbReference>
<dbReference type="InterPro" id="IPR031309">
    <property type="entry name" value="Ribosomal_uL5_C"/>
</dbReference>
<dbReference type="InterPro" id="IPR022803">
    <property type="entry name" value="Ribosomal_uL5_dom_sf"/>
</dbReference>
<dbReference type="InterPro" id="IPR031310">
    <property type="entry name" value="Ribosomal_uL5_N"/>
</dbReference>
<dbReference type="NCBIfam" id="NF000585">
    <property type="entry name" value="PRK00010.1"/>
    <property type="match status" value="1"/>
</dbReference>
<dbReference type="PANTHER" id="PTHR11994">
    <property type="entry name" value="60S RIBOSOMAL PROTEIN L11-RELATED"/>
    <property type="match status" value="1"/>
</dbReference>
<dbReference type="Pfam" id="PF00281">
    <property type="entry name" value="Ribosomal_L5"/>
    <property type="match status" value="1"/>
</dbReference>
<dbReference type="Pfam" id="PF00673">
    <property type="entry name" value="Ribosomal_L5_C"/>
    <property type="match status" value="1"/>
</dbReference>
<dbReference type="PIRSF" id="PIRSF002161">
    <property type="entry name" value="Ribosomal_L5"/>
    <property type="match status" value="1"/>
</dbReference>
<dbReference type="SUPFAM" id="SSF55282">
    <property type="entry name" value="RL5-like"/>
    <property type="match status" value="1"/>
</dbReference>
<gene>
    <name evidence="1" type="primary">rplE</name>
    <name type="ordered locus">BCG_0766</name>
</gene>
<feature type="chain" id="PRO_1000052776" description="Large ribosomal subunit protein uL5">
    <location>
        <begin position="1"/>
        <end position="187"/>
    </location>
</feature>
<organism>
    <name type="scientific">Mycobacterium bovis (strain BCG / Pasteur 1173P2)</name>
    <dbReference type="NCBI Taxonomy" id="410289"/>
    <lineage>
        <taxon>Bacteria</taxon>
        <taxon>Bacillati</taxon>
        <taxon>Actinomycetota</taxon>
        <taxon>Actinomycetes</taxon>
        <taxon>Mycobacteriales</taxon>
        <taxon>Mycobacteriaceae</taxon>
        <taxon>Mycobacterium</taxon>
        <taxon>Mycobacterium tuberculosis complex</taxon>
    </lineage>
</organism>